<accession>Q5RDR5</accession>
<keyword id="KW-0131">Cell cycle</keyword>
<keyword id="KW-0325">Glycoprotein</keyword>
<keyword id="KW-0338">Growth arrest</keyword>
<keyword id="KW-1185">Reference proteome</keyword>
<keyword id="KW-0964">Secreted</keyword>
<keyword id="KW-0732">Signal</keyword>
<evidence type="ECO:0000250" key="1"/>
<evidence type="ECO:0000255" key="2"/>
<evidence type="ECO:0000305" key="3"/>
<proteinExistence type="evidence at transcript level"/>
<sequence>MRWQCGTRFRGLRPVVAPWTALLALGLPGWVLAVSATAAAVVPEQHASTAGQHPLDWLLTDRGPFHRAQEYADFMERYRQGFTTRYRIYREFARWKVNNLALERKDFFSLPLPLAPESIRNIRLLGRRPNLQQVTENLIKKYGTHFLLSATLGGEESLTIFVDKRKLGRKTETTGGASIIGGSGNSTAVSLETLHQLAASYFIDRESTLRRLHHIQIATGAIKVTETRTGPLGCSNYDNLDSVSSVLVQSPENKVQLLGLQVLLPEYLRERFVAAALSYITCSSEGELVCKENDCWCKCSPTFPDCNCPDADIQAMEDSLLQIQDSWATHNRQFEESEEFQALLKRLPDDRFLNSTAISQFWAMDTSLQHRYQQLGAGLKVLFKKTHRIVRRLFNLCKRCHRQPRFRLPKERSLSYWWNRIQSLLYCGESTFPGTFLEQSHSCTCPYDQSSCQGPIPCALGEGPACAHCAPDNSTRCGSCNPGYVLAQGLCRPEVAESLENFLGLETDLQDLELKYLLQKQDSRIEVHSIFISNDMRLGSWFDPSWRKRMLLTLKSNKYKPGLVHVMLALSLQICLTKNSTLEPVMAIYVNPFGGSHSESWFMPVNEGSFPDWERTNVDAAAQCQNWTITLGNRWKTFFETVHVYLRSRIKSLDDSSNETIYYEPLEMTDPSKNLGYMKINTLQVFGYSLPFDPDAIRDLILQLDYPYTQGSQDSALLQLIELRDRVNQLSPPGKVRLDLFSCLLRHRLKLANNEVGRIQSSLRAFNSKLPNPVEYETGKLCS</sequence>
<reference key="1">
    <citation type="submission" date="2004-11" db="EMBL/GenBank/DDBJ databases">
        <authorList>
            <consortium name="The German cDNA consortium"/>
        </authorList>
    </citation>
    <scope>NUCLEOTIDE SEQUENCE [LARGE SCALE MRNA]</scope>
    <source>
        <tissue>Brain cortex</tissue>
    </source>
</reference>
<gene>
    <name type="primary">BRINP2</name>
    <name type="synonym">FAM5B</name>
</gene>
<feature type="signal peptide" evidence="2">
    <location>
        <begin position="1"/>
        <end position="33"/>
    </location>
</feature>
<feature type="chain" id="PRO_0000045772" description="BMP/retinoic acid-inducible neural-specific protein 2">
    <location>
        <begin position="34"/>
        <end position="783"/>
    </location>
</feature>
<feature type="domain" description="MACPF">
    <location>
        <begin position="85"/>
        <end position="281"/>
    </location>
</feature>
<feature type="glycosylation site" description="N-linked (GlcNAc...) asparagine" evidence="2">
    <location>
        <position position="185"/>
    </location>
</feature>
<feature type="glycosylation site" description="N-linked (GlcNAc...) asparagine" evidence="2">
    <location>
        <position position="354"/>
    </location>
</feature>
<feature type="glycosylation site" description="N-linked (GlcNAc...) asparagine" evidence="2">
    <location>
        <position position="473"/>
    </location>
</feature>
<feature type="glycosylation site" description="N-linked (GlcNAc...) asparagine" evidence="2">
    <location>
        <position position="579"/>
    </location>
</feature>
<feature type="glycosylation site" description="N-linked (GlcNAc...) asparagine" evidence="2">
    <location>
        <position position="626"/>
    </location>
</feature>
<feature type="glycosylation site" description="N-linked (GlcNAc...) asparagine" evidence="2">
    <location>
        <position position="658"/>
    </location>
</feature>
<comment type="function">
    <text evidence="1">Inhibits neuronal cell proliferation by negative regulation of the cell cycle transition.</text>
</comment>
<comment type="subcellular location">
    <subcellularLocation>
        <location evidence="3">Secreted</location>
    </subcellularLocation>
</comment>
<comment type="similarity">
    <text evidence="3">Belongs to the BRINP family.</text>
</comment>
<name>BRNP2_PONAB</name>
<protein>
    <recommendedName>
        <fullName>BMP/retinoic acid-inducible neural-specific protein 2</fullName>
    </recommendedName>
</protein>
<organism>
    <name type="scientific">Pongo abelii</name>
    <name type="common">Sumatran orangutan</name>
    <name type="synonym">Pongo pygmaeus abelii</name>
    <dbReference type="NCBI Taxonomy" id="9601"/>
    <lineage>
        <taxon>Eukaryota</taxon>
        <taxon>Metazoa</taxon>
        <taxon>Chordata</taxon>
        <taxon>Craniata</taxon>
        <taxon>Vertebrata</taxon>
        <taxon>Euteleostomi</taxon>
        <taxon>Mammalia</taxon>
        <taxon>Eutheria</taxon>
        <taxon>Euarchontoglires</taxon>
        <taxon>Primates</taxon>
        <taxon>Haplorrhini</taxon>
        <taxon>Catarrhini</taxon>
        <taxon>Hominidae</taxon>
        <taxon>Pongo</taxon>
    </lineage>
</organism>
<dbReference type="EMBL" id="CR857837">
    <property type="protein sequence ID" value="CAH90092.1"/>
    <property type="molecule type" value="mRNA"/>
</dbReference>
<dbReference type="FunCoup" id="Q5RDR5">
    <property type="interactions" value="74"/>
</dbReference>
<dbReference type="STRING" id="9601.ENSPPYP00000000550"/>
<dbReference type="GlyCosmos" id="Q5RDR5">
    <property type="glycosylation" value="6 sites, No reported glycans"/>
</dbReference>
<dbReference type="eggNOG" id="ENOG502QQZS">
    <property type="taxonomic scope" value="Eukaryota"/>
</dbReference>
<dbReference type="InParanoid" id="Q5RDR5"/>
<dbReference type="Proteomes" id="UP000001595">
    <property type="component" value="Unplaced"/>
</dbReference>
<dbReference type="GO" id="GO:0005737">
    <property type="term" value="C:cytoplasm"/>
    <property type="evidence" value="ECO:0007669"/>
    <property type="project" value="TreeGrafter"/>
</dbReference>
<dbReference type="GO" id="GO:0030425">
    <property type="term" value="C:dendrite"/>
    <property type="evidence" value="ECO:0007669"/>
    <property type="project" value="TreeGrafter"/>
</dbReference>
<dbReference type="GO" id="GO:0005576">
    <property type="term" value="C:extracellular region"/>
    <property type="evidence" value="ECO:0007669"/>
    <property type="project" value="UniProtKB-SubCell"/>
</dbReference>
<dbReference type="GO" id="GO:0043025">
    <property type="term" value="C:neuronal cell body"/>
    <property type="evidence" value="ECO:0007669"/>
    <property type="project" value="TreeGrafter"/>
</dbReference>
<dbReference type="GO" id="GO:0071300">
    <property type="term" value="P:cellular response to retinoic acid"/>
    <property type="evidence" value="ECO:0007669"/>
    <property type="project" value="TreeGrafter"/>
</dbReference>
<dbReference type="GO" id="GO:0045930">
    <property type="term" value="P:negative regulation of mitotic cell cycle"/>
    <property type="evidence" value="ECO:0007669"/>
    <property type="project" value="InterPro"/>
</dbReference>
<dbReference type="GO" id="GO:0007399">
    <property type="term" value="P:nervous system development"/>
    <property type="evidence" value="ECO:0007669"/>
    <property type="project" value="TreeGrafter"/>
</dbReference>
<dbReference type="GO" id="GO:0045666">
    <property type="term" value="P:positive regulation of neuron differentiation"/>
    <property type="evidence" value="ECO:0007669"/>
    <property type="project" value="InterPro"/>
</dbReference>
<dbReference type="InterPro" id="IPR033237">
    <property type="entry name" value="BRINP"/>
</dbReference>
<dbReference type="InterPro" id="IPR020864">
    <property type="entry name" value="MACPF"/>
</dbReference>
<dbReference type="PANTHER" id="PTHR15564:SF8">
    <property type="entry name" value="BMP_RETINOIC ACID-INDUCIBLE NEURAL-SPECIFIC PROTEIN 2"/>
    <property type="match status" value="1"/>
</dbReference>
<dbReference type="PANTHER" id="PTHR15564">
    <property type="entry name" value="MACPF DOMAIN-CONTAINING PROTEIN"/>
    <property type="match status" value="1"/>
</dbReference>
<dbReference type="Pfam" id="PF19052">
    <property type="entry name" value="BRINP"/>
    <property type="match status" value="1"/>
</dbReference>
<dbReference type="Pfam" id="PF25415">
    <property type="entry name" value="EGF_BRNP1-3"/>
    <property type="match status" value="1"/>
</dbReference>
<dbReference type="Pfam" id="PF01823">
    <property type="entry name" value="MACPF"/>
    <property type="match status" value="1"/>
</dbReference>
<dbReference type="SMART" id="SM00457">
    <property type="entry name" value="MACPF"/>
    <property type="match status" value="1"/>
</dbReference>